<sequence>MPKKILKGTVVSDKMDKTVVVSVERVFQHPLYKKTIKTRKKYKAHDEENICQLGDMVEIIESSPISKTKRWKVLRIVKEGDTQ</sequence>
<reference key="1">
    <citation type="submission" date="2008-08" db="EMBL/GenBank/DDBJ databases">
        <title>The complete genome sequence of Thermodesulfovibrio yellowstonii strain ATCC 51303 / DSM 11347 / YP87.</title>
        <authorList>
            <person name="Dodson R.J."/>
            <person name="Durkin A.S."/>
            <person name="Wu M."/>
            <person name="Eisen J."/>
            <person name="Sutton G."/>
        </authorList>
    </citation>
    <scope>NUCLEOTIDE SEQUENCE [LARGE SCALE GENOMIC DNA]</scope>
    <source>
        <strain>ATCC 51303 / DSM 11347 / YP87</strain>
    </source>
</reference>
<proteinExistence type="inferred from homology"/>
<protein>
    <recommendedName>
        <fullName evidence="1">Small ribosomal subunit protein uS17</fullName>
    </recommendedName>
    <alternativeName>
        <fullName evidence="2">30S ribosomal protein S17</fullName>
    </alternativeName>
</protein>
<evidence type="ECO:0000255" key="1">
    <source>
        <dbReference type="HAMAP-Rule" id="MF_01345"/>
    </source>
</evidence>
<evidence type="ECO:0000305" key="2"/>
<organism>
    <name type="scientific">Thermodesulfovibrio yellowstonii (strain ATCC 51303 / DSM 11347 / YP87)</name>
    <dbReference type="NCBI Taxonomy" id="289376"/>
    <lineage>
        <taxon>Bacteria</taxon>
        <taxon>Pseudomonadati</taxon>
        <taxon>Nitrospirota</taxon>
        <taxon>Thermodesulfovibrionia</taxon>
        <taxon>Thermodesulfovibrionales</taxon>
        <taxon>Thermodesulfovibrionaceae</taxon>
        <taxon>Thermodesulfovibrio</taxon>
    </lineage>
</organism>
<accession>B5YG38</accession>
<keyword id="KW-1185">Reference proteome</keyword>
<keyword id="KW-0687">Ribonucleoprotein</keyword>
<keyword id="KW-0689">Ribosomal protein</keyword>
<keyword id="KW-0694">RNA-binding</keyword>
<keyword id="KW-0699">rRNA-binding</keyword>
<name>RS17_THEYD</name>
<comment type="function">
    <text evidence="1">One of the primary rRNA binding proteins, it binds specifically to the 5'-end of 16S ribosomal RNA.</text>
</comment>
<comment type="subunit">
    <text evidence="1">Part of the 30S ribosomal subunit.</text>
</comment>
<comment type="similarity">
    <text evidence="1">Belongs to the universal ribosomal protein uS17 family.</text>
</comment>
<dbReference type="EMBL" id="CP001147">
    <property type="protein sequence ID" value="ACI21433.1"/>
    <property type="molecule type" value="Genomic_DNA"/>
</dbReference>
<dbReference type="RefSeq" id="WP_012546149.1">
    <property type="nucleotide sequence ID" value="NC_011296.1"/>
</dbReference>
<dbReference type="RefSeq" id="YP_002249236.1">
    <property type="nucleotide sequence ID" value="NC_011296.1"/>
</dbReference>
<dbReference type="SMR" id="B5YG38"/>
<dbReference type="FunCoup" id="B5YG38">
    <property type="interactions" value="366"/>
</dbReference>
<dbReference type="STRING" id="289376.THEYE_A1437"/>
<dbReference type="EnsemblBacteria" id="ACI21433">
    <property type="protein sequence ID" value="ACI21433"/>
    <property type="gene ID" value="THEYE_A1437"/>
</dbReference>
<dbReference type="KEGG" id="tye:THEYE_A1437"/>
<dbReference type="PATRIC" id="fig|289376.4.peg.1398"/>
<dbReference type="eggNOG" id="COG0186">
    <property type="taxonomic scope" value="Bacteria"/>
</dbReference>
<dbReference type="HOGENOM" id="CLU_073626_1_1_0"/>
<dbReference type="InParanoid" id="B5YG38"/>
<dbReference type="OrthoDB" id="9811714at2"/>
<dbReference type="Proteomes" id="UP000000718">
    <property type="component" value="Chromosome"/>
</dbReference>
<dbReference type="GO" id="GO:0022627">
    <property type="term" value="C:cytosolic small ribosomal subunit"/>
    <property type="evidence" value="ECO:0000318"/>
    <property type="project" value="GO_Central"/>
</dbReference>
<dbReference type="GO" id="GO:0019843">
    <property type="term" value="F:rRNA binding"/>
    <property type="evidence" value="ECO:0007669"/>
    <property type="project" value="UniProtKB-UniRule"/>
</dbReference>
<dbReference type="GO" id="GO:0003735">
    <property type="term" value="F:structural constituent of ribosome"/>
    <property type="evidence" value="ECO:0000318"/>
    <property type="project" value="GO_Central"/>
</dbReference>
<dbReference type="GO" id="GO:0006412">
    <property type="term" value="P:translation"/>
    <property type="evidence" value="ECO:0007669"/>
    <property type="project" value="UniProtKB-UniRule"/>
</dbReference>
<dbReference type="CDD" id="cd00364">
    <property type="entry name" value="Ribosomal_uS17"/>
    <property type="match status" value="1"/>
</dbReference>
<dbReference type="FunFam" id="2.40.50.140:FF:000204">
    <property type="entry name" value="30S ribosomal protein S17"/>
    <property type="match status" value="1"/>
</dbReference>
<dbReference type="Gene3D" id="2.40.50.140">
    <property type="entry name" value="Nucleic acid-binding proteins"/>
    <property type="match status" value="1"/>
</dbReference>
<dbReference type="HAMAP" id="MF_01345_B">
    <property type="entry name" value="Ribosomal_uS17_B"/>
    <property type="match status" value="1"/>
</dbReference>
<dbReference type="InterPro" id="IPR012340">
    <property type="entry name" value="NA-bd_OB-fold"/>
</dbReference>
<dbReference type="InterPro" id="IPR000266">
    <property type="entry name" value="Ribosomal_uS17"/>
</dbReference>
<dbReference type="InterPro" id="IPR019984">
    <property type="entry name" value="Ribosomal_uS17_bact/chlr"/>
</dbReference>
<dbReference type="NCBIfam" id="NF004123">
    <property type="entry name" value="PRK05610.1"/>
    <property type="match status" value="1"/>
</dbReference>
<dbReference type="NCBIfam" id="TIGR03635">
    <property type="entry name" value="uS17_bact"/>
    <property type="match status" value="1"/>
</dbReference>
<dbReference type="PANTHER" id="PTHR10744">
    <property type="entry name" value="40S RIBOSOMAL PROTEIN S11 FAMILY MEMBER"/>
    <property type="match status" value="1"/>
</dbReference>
<dbReference type="PANTHER" id="PTHR10744:SF1">
    <property type="entry name" value="SMALL RIBOSOMAL SUBUNIT PROTEIN US17M"/>
    <property type="match status" value="1"/>
</dbReference>
<dbReference type="Pfam" id="PF00366">
    <property type="entry name" value="Ribosomal_S17"/>
    <property type="match status" value="1"/>
</dbReference>
<dbReference type="PRINTS" id="PR00973">
    <property type="entry name" value="RIBOSOMALS17"/>
</dbReference>
<dbReference type="SUPFAM" id="SSF50249">
    <property type="entry name" value="Nucleic acid-binding proteins"/>
    <property type="match status" value="1"/>
</dbReference>
<gene>
    <name evidence="1" type="primary">rpsQ</name>
    <name type="ordered locus">THEYE_A1437</name>
</gene>
<feature type="chain" id="PRO_1000143318" description="Small ribosomal subunit protein uS17">
    <location>
        <begin position="1"/>
        <end position="83"/>
    </location>
</feature>